<gene>
    <name evidence="2" type="primary">eIF-3p40</name>
    <name evidence="2" type="synonym">eif3-S3</name>
    <name type="ORF">GE18701</name>
</gene>
<dbReference type="EMBL" id="CM000157">
    <property type="protein sequence ID" value="EDW88390.1"/>
    <property type="molecule type" value="Genomic_DNA"/>
</dbReference>
<dbReference type="SMR" id="B4P3T9"/>
<dbReference type="MEROPS" id="M67.971"/>
<dbReference type="EnsemblMetazoa" id="FBtr0265219">
    <property type="protein sequence ID" value="FBpp0263711"/>
    <property type="gene ID" value="FBgn0236098"/>
</dbReference>
<dbReference type="EnsemblMetazoa" id="XM_002088642.4">
    <property type="protein sequence ID" value="XP_002088678.1"/>
    <property type="gene ID" value="LOC6527590"/>
</dbReference>
<dbReference type="GeneID" id="6527590"/>
<dbReference type="KEGG" id="dya:Dyak_GE18701"/>
<dbReference type="CTD" id="8667"/>
<dbReference type="eggNOG" id="KOG1560">
    <property type="taxonomic scope" value="Eukaryota"/>
</dbReference>
<dbReference type="HOGENOM" id="CLU_044094_0_0_1"/>
<dbReference type="OMA" id="WYQSTYF"/>
<dbReference type="OrthoDB" id="10265695at2759"/>
<dbReference type="PhylomeDB" id="B4P3T9"/>
<dbReference type="ChiTaRS" id="eIF-3p40">
    <property type="organism name" value="fly"/>
</dbReference>
<dbReference type="Proteomes" id="UP000002282">
    <property type="component" value="Chromosome 2L"/>
</dbReference>
<dbReference type="GO" id="GO:0016282">
    <property type="term" value="C:eukaryotic 43S preinitiation complex"/>
    <property type="evidence" value="ECO:0007669"/>
    <property type="project" value="UniProtKB-UniRule"/>
</dbReference>
<dbReference type="GO" id="GO:0033290">
    <property type="term" value="C:eukaryotic 48S preinitiation complex"/>
    <property type="evidence" value="ECO:0007669"/>
    <property type="project" value="UniProtKB-UniRule"/>
</dbReference>
<dbReference type="GO" id="GO:0005852">
    <property type="term" value="C:eukaryotic translation initiation factor 3 complex"/>
    <property type="evidence" value="ECO:0007669"/>
    <property type="project" value="UniProtKB-UniRule"/>
</dbReference>
<dbReference type="GO" id="GO:0008237">
    <property type="term" value="F:metallopeptidase activity"/>
    <property type="evidence" value="ECO:0007669"/>
    <property type="project" value="InterPro"/>
</dbReference>
<dbReference type="GO" id="GO:0003743">
    <property type="term" value="F:translation initiation factor activity"/>
    <property type="evidence" value="ECO:0007669"/>
    <property type="project" value="UniProtKB-UniRule"/>
</dbReference>
<dbReference type="GO" id="GO:0001732">
    <property type="term" value="P:formation of cytoplasmic translation initiation complex"/>
    <property type="evidence" value="ECO:0007669"/>
    <property type="project" value="UniProtKB-UniRule"/>
</dbReference>
<dbReference type="GO" id="GO:0045747">
    <property type="term" value="P:positive regulation of Notch signaling pathway"/>
    <property type="evidence" value="ECO:0007669"/>
    <property type="project" value="EnsemblMetazoa"/>
</dbReference>
<dbReference type="CDD" id="cd08065">
    <property type="entry name" value="MPN_eIF3h"/>
    <property type="match status" value="1"/>
</dbReference>
<dbReference type="FunFam" id="3.40.140.10:FF:000045">
    <property type="entry name" value="Eukaryotic translation initiation factor 3 subunit H"/>
    <property type="match status" value="1"/>
</dbReference>
<dbReference type="Gene3D" id="3.40.140.10">
    <property type="entry name" value="Cytidine Deaminase, domain 2"/>
    <property type="match status" value="1"/>
</dbReference>
<dbReference type="HAMAP" id="MF_03007">
    <property type="entry name" value="eIF3h"/>
    <property type="match status" value="1"/>
</dbReference>
<dbReference type="InterPro" id="IPR027524">
    <property type="entry name" value="eIF3h"/>
</dbReference>
<dbReference type="InterPro" id="IPR045810">
    <property type="entry name" value="eIF3h_C"/>
</dbReference>
<dbReference type="InterPro" id="IPR000555">
    <property type="entry name" value="JAMM/MPN+_dom"/>
</dbReference>
<dbReference type="InterPro" id="IPR050242">
    <property type="entry name" value="JAMM_MPN+_peptidase_M67A"/>
</dbReference>
<dbReference type="InterPro" id="IPR037518">
    <property type="entry name" value="MPN"/>
</dbReference>
<dbReference type="PANTHER" id="PTHR10410">
    <property type="entry name" value="EUKARYOTIC TRANSLATION INITIATION FACTOR 3 -RELATED"/>
    <property type="match status" value="1"/>
</dbReference>
<dbReference type="Pfam" id="PF19445">
    <property type="entry name" value="eIF3h_C"/>
    <property type="match status" value="1"/>
</dbReference>
<dbReference type="Pfam" id="PF01398">
    <property type="entry name" value="JAB"/>
    <property type="match status" value="1"/>
</dbReference>
<dbReference type="SMART" id="SM00232">
    <property type="entry name" value="JAB_MPN"/>
    <property type="match status" value="1"/>
</dbReference>
<dbReference type="PROSITE" id="PS50249">
    <property type="entry name" value="MPN"/>
    <property type="match status" value="1"/>
</dbReference>
<name>EIF3H_DROYA</name>
<keyword id="KW-0963">Cytoplasm</keyword>
<keyword id="KW-0396">Initiation factor</keyword>
<keyword id="KW-0648">Protein biosynthesis</keyword>
<protein>
    <recommendedName>
        <fullName evidence="2">Eukaryotic translation initiation factor 3 subunit H</fullName>
        <shortName evidence="2">eIF3h</shortName>
    </recommendedName>
    <alternativeName>
        <fullName evidence="2">Eukaryotic translation initiation factor 3 subunit 3</fullName>
    </alternativeName>
</protein>
<proteinExistence type="inferred from homology"/>
<comment type="function">
    <text evidence="2">Component of the eukaryotic translation initiation factor 3 (eIF-3) complex, which is involved in protein synthesis of a specialized repertoire of mRNAs and, together with other initiation factors, stimulates binding of mRNA and methionyl-tRNAi to the 40S ribosome. The eIF-3 complex specifically targets and initiates translation of a subset of mRNAs involved in cell proliferation.</text>
</comment>
<comment type="subunit">
    <text evidence="1 2">Component of the eukaryotic translation initiation factor 3 (eIF-3) complex. The eIF-3 complex interacts with pix. Interacts with mxt (By similarity).</text>
</comment>
<comment type="subcellular location">
    <subcellularLocation>
        <location evidence="2">Cytoplasm</location>
    </subcellularLocation>
</comment>
<comment type="similarity">
    <text evidence="2">Belongs to the eIF-3 subunit H family.</text>
</comment>
<feature type="chain" id="PRO_0000365194" description="Eukaryotic translation initiation factor 3 subunit H">
    <location>
        <begin position="1"/>
        <end position="338"/>
    </location>
</feature>
<feature type="domain" description="MPN" evidence="3">
    <location>
        <begin position="22"/>
        <end position="154"/>
    </location>
</feature>
<organism>
    <name type="scientific">Drosophila yakuba</name>
    <name type="common">Fruit fly</name>
    <dbReference type="NCBI Taxonomy" id="7245"/>
    <lineage>
        <taxon>Eukaryota</taxon>
        <taxon>Metazoa</taxon>
        <taxon>Ecdysozoa</taxon>
        <taxon>Arthropoda</taxon>
        <taxon>Hexapoda</taxon>
        <taxon>Insecta</taxon>
        <taxon>Pterygota</taxon>
        <taxon>Neoptera</taxon>
        <taxon>Endopterygota</taxon>
        <taxon>Diptera</taxon>
        <taxon>Brachycera</taxon>
        <taxon>Muscomorpha</taxon>
        <taxon>Ephydroidea</taxon>
        <taxon>Drosophilidae</taxon>
        <taxon>Drosophila</taxon>
        <taxon>Sophophora</taxon>
    </lineage>
</organism>
<accession>B4P3T9</accession>
<evidence type="ECO:0000250" key="1">
    <source>
        <dbReference type="UniProtKB" id="Q9U9Q4"/>
    </source>
</evidence>
<evidence type="ECO:0000255" key="2">
    <source>
        <dbReference type="HAMAP-Rule" id="MF_03007"/>
    </source>
</evidence>
<evidence type="ECO:0000255" key="3">
    <source>
        <dbReference type="PROSITE-ProRule" id="PRU01182"/>
    </source>
</evidence>
<reference key="1">
    <citation type="journal article" date="2007" name="Nature">
        <title>Evolution of genes and genomes on the Drosophila phylogeny.</title>
        <authorList>
            <consortium name="Drosophila 12 genomes consortium"/>
        </authorList>
    </citation>
    <scope>NUCLEOTIDE SEQUENCE [LARGE SCALE GENOMIC DNA]</scope>
    <source>
        <strain>Tai18E2 / Tucson 14021-0261.01</strain>
    </source>
</reference>
<sequence>MANRANRHAARTEDSDNTINYVQCDGLAVMKMVKHCHEESSNMDLAQGALLGLVVDKCLEITNCFPFPKSGDETMDEEMYQLTVMRRLRRVNVDHLHVGWYQSSDVGNSLSLALLESQYHYQTSIEESVVVVYDTQKSSRGFLCLKAYRLTPQAIQMYKDGDFTPEAFRTLKVGYESLFAEIPIVIKNSPLTNIMMSELNELLPEDKGHNFLDLGTATVLENQMRSLIERVDELYQEAVRYNKYQQVVFKQDTEKHRALAKLAAENAVRTSKGEPTVAEEEVIKQFRPMTAPNRLTATITSGQINTHAQHIAQFCSQSLAKLFITESLQNAKEAKETK</sequence>